<sequence>MIYVDADACPVKPEILKVAERHGLEVTFVANSGLRPSRDPMVRNVIVSAGFDAADDWIAERAKDGDIVVTADVPLAVRCVGAGALVTGPTGRVFDETNIGMASAMRDLSAHLRETGESKGYNAALTSRDRSAFLETLDRLCRRVKR</sequence>
<feature type="chain" id="PRO_0000175998" description="UPF0178 protein R01393">
    <location>
        <begin position="1"/>
        <end position="146"/>
    </location>
</feature>
<name>Y1393_RHIME</name>
<accession>Q92QD8</accession>
<proteinExistence type="inferred from homology"/>
<evidence type="ECO:0000255" key="1">
    <source>
        <dbReference type="HAMAP-Rule" id="MF_00489"/>
    </source>
</evidence>
<keyword id="KW-1185">Reference proteome</keyword>
<gene>
    <name type="ordered locus">R01393</name>
    <name type="ORF">SMc01271</name>
</gene>
<dbReference type="EMBL" id="AL591688">
    <property type="protein sequence ID" value="CAC45972.1"/>
    <property type="molecule type" value="Genomic_DNA"/>
</dbReference>
<dbReference type="RefSeq" id="NP_385499.1">
    <property type="nucleotide sequence ID" value="NC_003047.1"/>
</dbReference>
<dbReference type="RefSeq" id="WP_003537410.1">
    <property type="nucleotide sequence ID" value="NC_003047.1"/>
</dbReference>
<dbReference type="EnsemblBacteria" id="CAC45972">
    <property type="protein sequence ID" value="CAC45972"/>
    <property type="gene ID" value="SMc01271"/>
</dbReference>
<dbReference type="KEGG" id="sme:SMc01271"/>
<dbReference type="PATRIC" id="fig|266834.11.peg.2811"/>
<dbReference type="eggNOG" id="COG1671">
    <property type="taxonomic scope" value="Bacteria"/>
</dbReference>
<dbReference type="HOGENOM" id="CLU_106619_2_1_5"/>
<dbReference type="OrthoDB" id="9798918at2"/>
<dbReference type="Proteomes" id="UP000001976">
    <property type="component" value="Chromosome"/>
</dbReference>
<dbReference type="CDD" id="cd18720">
    <property type="entry name" value="PIN_YqxD-like"/>
    <property type="match status" value="1"/>
</dbReference>
<dbReference type="HAMAP" id="MF_00489">
    <property type="entry name" value="UPF0178"/>
    <property type="match status" value="1"/>
</dbReference>
<dbReference type="InterPro" id="IPR003791">
    <property type="entry name" value="UPF0178"/>
</dbReference>
<dbReference type="NCBIfam" id="NF001095">
    <property type="entry name" value="PRK00124.1"/>
    <property type="match status" value="1"/>
</dbReference>
<dbReference type="PANTHER" id="PTHR35146">
    <property type="entry name" value="UPF0178 PROTEIN YAII"/>
    <property type="match status" value="1"/>
</dbReference>
<dbReference type="PANTHER" id="PTHR35146:SF1">
    <property type="entry name" value="UPF0178 PROTEIN YAII"/>
    <property type="match status" value="1"/>
</dbReference>
<dbReference type="Pfam" id="PF02639">
    <property type="entry name" value="DUF188"/>
    <property type="match status" value="1"/>
</dbReference>
<organism>
    <name type="scientific">Rhizobium meliloti (strain 1021)</name>
    <name type="common">Ensifer meliloti</name>
    <name type="synonym">Sinorhizobium meliloti</name>
    <dbReference type="NCBI Taxonomy" id="266834"/>
    <lineage>
        <taxon>Bacteria</taxon>
        <taxon>Pseudomonadati</taxon>
        <taxon>Pseudomonadota</taxon>
        <taxon>Alphaproteobacteria</taxon>
        <taxon>Hyphomicrobiales</taxon>
        <taxon>Rhizobiaceae</taxon>
        <taxon>Sinorhizobium/Ensifer group</taxon>
        <taxon>Sinorhizobium</taxon>
    </lineage>
</organism>
<comment type="similarity">
    <text evidence="1">Belongs to the UPF0178 family.</text>
</comment>
<protein>
    <recommendedName>
        <fullName evidence="1">UPF0178 protein R01393</fullName>
    </recommendedName>
</protein>
<reference key="1">
    <citation type="journal article" date="2001" name="Proc. Natl. Acad. Sci. U.S.A.">
        <title>Analysis of the chromosome sequence of the legume symbiont Sinorhizobium meliloti strain 1021.</title>
        <authorList>
            <person name="Capela D."/>
            <person name="Barloy-Hubler F."/>
            <person name="Gouzy J."/>
            <person name="Bothe G."/>
            <person name="Ampe F."/>
            <person name="Batut J."/>
            <person name="Boistard P."/>
            <person name="Becker A."/>
            <person name="Boutry M."/>
            <person name="Cadieu E."/>
            <person name="Dreano S."/>
            <person name="Gloux S."/>
            <person name="Godrie T."/>
            <person name="Goffeau A."/>
            <person name="Kahn D."/>
            <person name="Kiss E."/>
            <person name="Lelaure V."/>
            <person name="Masuy D."/>
            <person name="Pohl T."/>
            <person name="Portetelle D."/>
            <person name="Puehler A."/>
            <person name="Purnelle B."/>
            <person name="Ramsperger U."/>
            <person name="Renard C."/>
            <person name="Thebault P."/>
            <person name="Vandenbol M."/>
            <person name="Weidner S."/>
            <person name="Galibert F."/>
        </authorList>
    </citation>
    <scope>NUCLEOTIDE SEQUENCE [LARGE SCALE GENOMIC DNA]</scope>
    <source>
        <strain>1021</strain>
    </source>
</reference>
<reference key="2">
    <citation type="journal article" date="2001" name="Science">
        <title>The composite genome of the legume symbiont Sinorhizobium meliloti.</title>
        <authorList>
            <person name="Galibert F."/>
            <person name="Finan T.M."/>
            <person name="Long S.R."/>
            <person name="Puehler A."/>
            <person name="Abola P."/>
            <person name="Ampe F."/>
            <person name="Barloy-Hubler F."/>
            <person name="Barnett M.J."/>
            <person name="Becker A."/>
            <person name="Boistard P."/>
            <person name="Bothe G."/>
            <person name="Boutry M."/>
            <person name="Bowser L."/>
            <person name="Buhrmester J."/>
            <person name="Cadieu E."/>
            <person name="Capela D."/>
            <person name="Chain P."/>
            <person name="Cowie A."/>
            <person name="Davis R.W."/>
            <person name="Dreano S."/>
            <person name="Federspiel N.A."/>
            <person name="Fisher R.F."/>
            <person name="Gloux S."/>
            <person name="Godrie T."/>
            <person name="Goffeau A."/>
            <person name="Golding B."/>
            <person name="Gouzy J."/>
            <person name="Gurjal M."/>
            <person name="Hernandez-Lucas I."/>
            <person name="Hong A."/>
            <person name="Huizar L."/>
            <person name="Hyman R.W."/>
            <person name="Jones T."/>
            <person name="Kahn D."/>
            <person name="Kahn M.L."/>
            <person name="Kalman S."/>
            <person name="Keating D.H."/>
            <person name="Kiss E."/>
            <person name="Komp C."/>
            <person name="Lelaure V."/>
            <person name="Masuy D."/>
            <person name="Palm C."/>
            <person name="Peck M.C."/>
            <person name="Pohl T.M."/>
            <person name="Portetelle D."/>
            <person name="Purnelle B."/>
            <person name="Ramsperger U."/>
            <person name="Surzycki R."/>
            <person name="Thebault P."/>
            <person name="Vandenbol M."/>
            <person name="Vorhoelter F.J."/>
            <person name="Weidner S."/>
            <person name="Wells D.H."/>
            <person name="Wong K."/>
            <person name="Yeh K.-C."/>
            <person name="Batut J."/>
        </authorList>
    </citation>
    <scope>NUCLEOTIDE SEQUENCE [LARGE SCALE GENOMIC DNA]</scope>
    <source>
        <strain>1021</strain>
    </source>
</reference>